<protein>
    <recommendedName>
        <fullName evidence="1">UPF0306 protein YhbP</fullName>
    </recommendedName>
</protein>
<comment type="similarity">
    <text evidence="1">Belongs to the UPF0306 family.</text>
</comment>
<sequence length="147" mass="16764">METLTAISRWLAKQHVVTWCVQQEGELWCANAFYLFDAQKVAFYILTEEKTRHAQMSGPQAAVAGTVNGQPKTVALIRGVQFKGEIRRLEGEESDLARKAYNRRFPVARMLSAPVWEIRLDEIKFTDNTLGFGKKMIWLRDSGTEQA</sequence>
<name>YHBP_ECO8A</name>
<gene>
    <name evidence="1" type="primary">yhbP</name>
    <name type="ordered locus">ECIAI1_3304</name>
</gene>
<proteinExistence type="inferred from homology"/>
<accession>B7M062</accession>
<reference key="1">
    <citation type="journal article" date="2009" name="PLoS Genet.">
        <title>Organised genome dynamics in the Escherichia coli species results in highly diverse adaptive paths.</title>
        <authorList>
            <person name="Touchon M."/>
            <person name="Hoede C."/>
            <person name="Tenaillon O."/>
            <person name="Barbe V."/>
            <person name="Baeriswyl S."/>
            <person name="Bidet P."/>
            <person name="Bingen E."/>
            <person name="Bonacorsi S."/>
            <person name="Bouchier C."/>
            <person name="Bouvet O."/>
            <person name="Calteau A."/>
            <person name="Chiapello H."/>
            <person name="Clermont O."/>
            <person name="Cruveiller S."/>
            <person name="Danchin A."/>
            <person name="Diard M."/>
            <person name="Dossat C."/>
            <person name="Karoui M.E."/>
            <person name="Frapy E."/>
            <person name="Garry L."/>
            <person name="Ghigo J.M."/>
            <person name="Gilles A.M."/>
            <person name="Johnson J."/>
            <person name="Le Bouguenec C."/>
            <person name="Lescat M."/>
            <person name="Mangenot S."/>
            <person name="Martinez-Jehanne V."/>
            <person name="Matic I."/>
            <person name="Nassif X."/>
            <person name="Oztas S."/>
            <person name="Petit M.A."/>
            <person name="Pichon C."/>
            <person name="Rouy Z."/>
            <person name="Ruf C.S."/>
            <person name="Schneider D."/>
            <person name="Tourret J."/>
            <person name="Vacherie B."/>
            <person name="Vallenet D."/>
            <person name="Medigue C."/>
            <person name="Rocha E.P.C."/>
            <person name="Denamur E."/>
        </authorList>
    </citation>
    <scope>NUCLEOTIDE SEQUENCE [LARGE SCALE GENOMIC DNA]</scope>
    <source>
        <strain>IAI1</strain>
    </source>
</reference>
<dbReference type="EMBL" id="CU928160">
    <property type="protein sequence ID" value="CAR00118.1"/>
    <property type="molecule type" value="Genomic_DNA"/>
</dbReference>
<dbReference type="RefSeq" id="WP_000449451.1">
    <property type="nucleotide sequence ID" value="NC_011741.1"/>
</dbReference>
<dbReference type="SMR" id="B7M062"/>
<dbReference type="KEGG" id="ecr:ECIAI1_3304"/>
<dbReference type="HOGENOM" id="CLU_105087_3_0_6"/>
<dbReference type="FunFam" id="2.30.110.10:FF:000003">
    <property type="entry name" value="UPF0306 protein YhbP"/>
    <property type="match status" value="1"/>
</dbReference>
<dbReference type="Gene3D" id="2.30.110.10">
    <property type="entry name" value="Electron Transport, Fmn-binding Protein, Chain A"/>
    <property type="match status" value="1"/>
</dbReference>
<dbReference type="HAMAP" id="MF_00764">
    <property type="entry name" value="UPF0306"/>
    <property type="match status" value="1"/>
</dbReference>
<dbReference type="InterPro" id="IPR012349">
    <property type="entry name" value="Split_barrel_FMN-bd"/>
</dbReference>
<dbReference type="InterPro" id="IPR011194">
    <property type="entry name" value="UPF0306"/>
</dbReference>
<dbReference type="NCBIfam" id="NF002900">
    <property type="entry name" value="PRK03467.1"/>
    <property type="match status" value="1"/>
</dbReference>
<dbReference type="PIRSF" id="PIRSF009554">
    <property type="entry name" value="UCP009554"/>
    <property type="match status" value="1"/>
</dbReference>
<dbReference type="SUPFAM" id="SSF50475">
    <property type="entry name" value="FMN-binding split barrel"/>
    <property type="match status" value="1"/>
</dbReference>
<evidence type="ECO:0000255" key="1">
    <source>
        <dbReference type="HAMAP-Rule" id="MF_00764"/>
    </source>
</evidence>
<organism>
    <name type="scientific">Escherichia coli O8 (strain IAI1)</name>
    <dbReference type="NCBI Taxonomy" id="585034"/>
    <lineage>
        <taxon>Bacteria</taxon>
        <taxon>Pseudomonadati</taxon>
        <taxon>Pseudomonadota</taxon>
        <taxon>Gammaproteobacteria</taxon>
        <taxon>Enterobacterales</taxon>
        <taxon>Enterobacteriaceae</taxon>
        <taxon>Escherichia</taxon>
    </lineage>
</organism>
<feature type="chain" id="PRO_1000198358" description="UPF0306 protein YhbP">
    <location>
        <begin position="1"/>
        <end position="147"/>
    </location>
</feature>